<organism>
    <name type="scientific">Zea mays</name>
    <name type="common">Maize</name>
    <dbReference type="NCBI Taxonomy" id="4577"/>
    <lineage>
        <taxon>Eukaryota</taxon>
        <taxon>Viridiplantae</taxon>
        <taxon>Streptophyta</taxon>
        <taxon>Embryophyta</taxon>
        <taxon>Tracheophyta</taxon>
        <taxon>Spermatophyta</taxon>
        <taxon>Magnoliopsida</taxon>
        <taxon>Liliopsida</taxon>
        <taxon>Poales</taxon>
        <taxon>Poaceae</taxon>
        <taxon>PACMAD clade</taxon>
        <taxon>Panicoideae</taxon>
        <taxon>Andropogonodae</taxon>
        <taxon>Andropogoneae</taxon>
        <taxon>Tripsacinae</taxon>
        <taxon>Zea</taxon>
    </lineage>
</organism>
<proteinExistence type="evidence at transcript level"/>
<protein>
    <recommendedName>
        <fullName>Glucose-6-phosphate isomerase, cytosolic</fullName>
        <shortName>GPI</shortName>
        <ecNumber>5.3.1.9</ecNumber>
    </recommendedName>
    <alternativeName>
        <fullName>Phosphoglucose isomerase</fullName>
        <shortName>PGI</shortName>
    </alternativeName>
    <alternativeName>
        <fullName>Phosphohexose isomerase</fullName>
        <shortName>PHI</shortName>
    </alternativeName>
</protein>
<comment type="catalytic activity">
    <reaction>
        <text>alpha-D-glucose 6-phosphate = beta-D-fructose 6-phosphate</text>
        <dbReference type="Rhea" id="RHEA:11816"/>
        <dbReference type="ChEBI" id="CHEBI:57634"/>
        <dbReference type="ChEBI" id="CHEBI:58225"/>
        <dbReference type="EC" id="5.3.1.9"/>
    </reaction>
</comment>
<comment type="pathway">
    <text>Carbohydrate degradation; glycolysis; D-glyceraldehyde 3-phosphate and glycerone phosphate from D-glucose: step 2/4.</text>
</comment>
<comment type="subunit">
    <text evidence="1">Homodimer.</text>
</comment>
<comment type="subcellular location">
    <subcellularLocation>
        <location>Cytoplasm</location>
    </subcellularLocation>
</comment>
<comment type="similarity">
    <text evidence="2">Belongs to the GPI family.</text>
</comment>
<feature type="chain" id="PRO_0000180564" description="Glucose-6-phosphate isomerase, cytosolic">
    <location>
        <begin position="1"/>
        <end position="567"/>
    </location>
</feature>
<feature type="active site" description="Proton donor" evidence="1">
    <location>
        <position position="360"/>
    </location>
</feature>
<feature type="active site" evidence="1">
    <location>
        <position position="391"/>
    </location>
</feature>
<feature type="active site" evidence="1">
    <location>
        <position position="516"/>
    </location>
</feature>
<name>G6PI_MAIZE</name>
<gene>
    <name type="primary">PHI1</name>
</gene>
<sequence>MASAALICGTEQWKALQAHVGAIQKTHLRDLMADADRCKAMTAEYEGIFLDYSRQQATGETMEKLLKLADAAKLKEKIEKMFKGEKINSTENRSVLHVALRAPRDAVINSDGVNVVPEVWSVKDKIKQFSETFRSGSWVGATGKPLTNVVSVGIGGSFLGPLFVHTALQTDPEAAECAKGRQLRFLANVDPVDVARSIKDLDPETTLVVVVSKTFTTAETMLNARTLKEWIVSSLGPQAVAKHMIAVSTNLKLVKEFGIDPNNAFAFWDWVGGRYSVCSAVGVLPLSLQYGFPIVQKFLEGASSIDNHFYSSSFEKNIPVLLGLLSVWNVSFLGYPARAILPYSQALEKLAPHIQQLSMESNGKGVSIDGAQLSFETGEIDFGEPGTNGQHSFYQLIHQGRVIPCDFIGVVKSQQPVYLKGETVSNHDELMSNFFAQPDALAYGKTPEQLHSEKVPENLIPHKTFKGNRPSLSLLLPTLSAYEVGQLLSIYEHRIAVQGFIWGINSFDQWGVELGKSLASQVRKQLHGTRMEGKPVEGFNHSTSSLLARYLAVKPSTPYDTTVLPKV</sequence>
<reference key="1">
    <citation type="journal article" date="1995" name="Plant Physiol.">
        <title>Cloning and characterization of an anaerobically induced cDNA encoding glucose-6-phosphate isomerase from maize.</title>
        <authorList>
            <person name="Lal S.K."/>
            <person name="Sachs M.M."/>
        </authorList>
    </citation>
    <scope>NUCLEOTIDE SEQUENCE [MRNA]</scope>
    <source>
        <strain>cv. B73</strain>
        <tissue>Root</tissue>
    </source>
</reference>
<evidence type="ECO:0000250" key="1"/>
<evidence type="ECO:0000305" key="2"/>
<dbReference type="EC" id="5.3.1.9"/>
<dbReference type="EMBL" id="U17225">
    <property type="protein sequence ID" value="AAA82734.1"/>
    <property type="molecule type" value="mRNA"/>
</dbReference>
<dbReference type="PIR" id="T02094">
    <property type="entry name" value="T02094"/>
</dbReference>
<dbReference type="RefSeq" id="NP_001105368.1">
    <property type="nucleotide sequence ID" value="NM_001111898.2"/>
</dbReference>
<dbReference type="SMR" id="P49105"/>
<dbReference type="FunCoup" id="P49105">
    <property type="interactions" value="3361"/>
</dbReference>
<dbReference type="STRING" id="4577.P49105"/>
<dbReference type="PaxDb" id="4577-GRMZM6G477257_P01"/>
<dbReference type="EnsemblPlants" id="Zm00001eb059230_T001">
    <property type="protein sequence ID" value="Zm00001eb059230_P001"/>
    <property type="gene ID" value="Zm00001eb059230"/>
</dbReference>
<dbReference type="GeneID" id="542313"/>
<dbReference type="Gramene" id="Zm00001eb059230_T001">
    <property type="protein sequence ID" value="Zm00001eb059230_P001"/>
    <property type="gene ID" value="Zm00001eb059230"/>
</dbReference>
<dbReference type="KEGG" id="zma:542313"/>
<dbReference type="MaizeGDB" id="13859"/>
<dbReference type="eggNOG" id="KOG2446">
    <property type="taxonomic scope" value="Eukaryota"/>
</dbReference>
<dbReference type="InParanoid" id="P49105"/>
<dbReference type="OMA" id="DWYRQLW"/>
<dbReference type="OrthoDB" id="5831190at2759"/>
<dbReference type="UniPathway" id="UPA00109">
    <property type="reaction ID" value="UER00181"/>
</dbReference>
<dbReference type="Proteomes" id="UP000007305">
    <property type="component" value="Chromosome 1"/>
</dbReference>
<dbReference type="ExpressionAtlas" id="P49105">
    <property type="expression patterns" value="baseline and differential"/>
</dbReference>
<dbReference type="GO" id="GO:0005829">
    <property type="term" value="C:cytosol"/>
    <property type="evidence" value="ECO:0000318"/>
    <property type="project" value="GO_Central"/>
</dbReference>
<dbReference type="GO" id="GO:0097367">
    <property type="term" value="F:carbohydrate derivative binding"/>
    <property type="evidence" value="ECO:0007669"/>
    <property type="project" value="InterPro"/>
</dbReference>
<dbReference type="GO" id="GO:0004347">
    <property type="term" value="F:glucose-6-phosphate isomerase activity"/>
    <property type="evidence" value="ECO:0000318"/>
    <property type="project" value="GO_Central"/>
</dbReference>
<dbReference type="GO" id="GO:0048029">
    <property type="term" value="F:monosaccharide binding"/>
    <property type="evidence" value="ECO:0000318"/>
    <property type="project" value="GO_Central"/>
</dbReference>
<dbReference type="GO" id="GO:0006094">
    <property type="term" value="P:gluconeogenesis"/>
    <property type="evidence" value="ECO:0000318"/>
    <property type="project" value="GO_Central"/>
</dbReference>
<dbReference type="GO" id="GO:0051156">
    <property type="term" value="P:glucose 6-phosphate metabolic process"/>
    <property type="evidence" value="ECO:0000318"/>
    <property type="project" value="GO_Central"/>
</dbReference>
<dbReference type="GO" id="GO:0006096">
    <property type="term" value="P:glycolytic process"/>
    <property type="evidence" value="ECO:0000318"/>
    <property type="project" value="GO_Central"/>
</dbReference>
<dbReference type="CDD" id="cd05015">
    <property type="entry name" value="SIS_PGI_1"/>
    <property type="match status" value="1"/>
</dbReference>
<dbReference type="CDD" id="cd05016">
    <property type="entry name" value="SIS_PGI_2"/>
    <property type="match status" value="1"/>
</dbReference>
<dbReference type="FunFam" id="1.10.1390.10:FF:000002">
    <property type="entry name" value="Glucose-6-phosphate isomerase"/>
    <property type="match status" value="1"/>
</dbReference>
<dbReference type="FunFam" id="3.40.50.10490:FF:000018">
    <property type="entry name" value="Glucose-6-phosphate isomerase"/>
    <property type="match status" value="1"/>
</dbReference>
<dbReference type="FunFam" id="3.40.50.10490:FF:000031">
    <property type="entry name" value="Glucose-6-phosphate isomerase"/>
    <property type="match status" value="1"/>
</dbReference>
<dbReference type="FunFam" id="3.40.50.10490:FF:000048">
    <property type="entry name" value="Glucose-6-phosphate isomerase"/>
    <property type="match status" value="1"/>
</dbReference>
<dbReference type="Gene3D" id="1.10.1390.10">
    <property type="match status" value="1"/>
</dbReference>
<dbReference type="Gene3D" id="3.40.50.10490">
    <property type="entry name" value="Glucose-6-phosphate isomerase like protein, domain 1"/>
    <property type="match status" value="3"/>
</dbReference>
<dbReference type="HAMAP" id="MF_00473">
    <property type="entry name" value="G6P_isomerase"/>
    <property type="match status" value="1"/>
</dbReference>
<dbReference type="InterPro" id="IPR001672">
    <property type="entry name" value="G6P_Isomerase"/>
</dbReference>
<dbReference type="InterPro" id="IPR023096">
    <property type="entry name" value="G6P_Isomerase_C"/>
</dbReference>
<dbReference type="InterPro" id="IPR018189">
    <property type="entry name" value="Phosphoglucose_isomerase_CS"/>
</dbReference>
<dbReference type="InterPro" id="IPR046348">
    <property type="entry name" value="SIS_dom_sf"/>
</dbReference>
<dbReference type="InterPro" id="IPR035476">
    <property type="entry name" value="SIS_PGI_1"/>
</dbReference>
<dbReference type="InterPro" id="IPR035482">
    <property type="entry name" value="SIS_PGI_2"/>
</dbReference>
<dbReference type="NCBIfam" id="NF001211">
    <property type="entry name" value="PRK00179.1"/>
    <property type="match status" value="1"/>
</dbReference>
<dbReference type="PANTHER" id="PTHR11469">
    <property type="entry name" value="GLUCOSE-6-PHOSPHATE ISOMERASE"/>
    <property type="match status" value="1"/>
</dbReference>
<dbReference type="PANTHER" id="PTHR11469:SF1">
    <property type="entry name" value="GLUCOSE-6-PHOSPHATE ISOMERASE"/>
    <property type="match status" value="1"/>
</dbReference>
<dbReference type="Pfam" id="PF00342">
    <property type="entry name" value="PGI"/>
    <property type="match status" value="1"/>
</dbReference>
<dbReference type="PRINTS" id="PR00662">
    <property type="entry name" value="G6PISOMERASE"/>
</dbReference>
<dbReference type="SUPFAM" id="SSF53697">
    <property type="entry name" value="SIS domain"/>
    <property type="match status" value="1"/>
</dbReference>
<dbReference type="PROSITE" id="PS00765">
    <property type="entry name" value="P_GLUCOSE_ISOMERASE_1"/>
    <property type="match status" value="1"/>
</dbReference>
<dbReference type="PROSITE" id="PS00174">
    <property type="entry name" value="P_GLUCOSE_ISOMERASE_2"/>
    <property type="match status" value="1"/>
</dbReference>
<dbReference type="PROSITE" id="PS51463">
    <property type="entry name" value="P_GLUCOSE_ISOMERASE_3"/>
    <property type="match status" value="1"/>
</dbReference>
<keyword id="KW-0963">Cytoplasm</keyword>
<keyword id="KW-0312">Gluconeogenesis</keyword>
<keyword id="KW-0324">Glycolysis</keyword>
<keyword id="KW-0413">Isomerase</keyword>
<keyword id="KW-1185">Reference proteome</keyword>
<accession>P49105</accession>